<feature type="chain" id="PRO_0000127568" description="Large ribosomal subunit protein eL15">
    <location>
        <begin position="1"/>
        <end position="225"/>
    </location>
</feature>
<feature type="region of interest" description="Disordered" evidence="1">
    <location>
        <begin position="159"/>
        <end position="180"/>
    </location>
</feature>
<feature type="compositionally biased region" description="Basic residues" evidence="1">
    <location>
        <begin position="169"/>
        <end position="180"/>
    </location>
</feature>
<evidence type="ECO:0000256" key="1">
    <source>
        <dbReference type="SAM" id="MobiDB-lite"/>
    </source>
</evidence>
<evidence type="ECO:0000305" key="2"/>
<protein>
    <recommendedName>
        <fullName evidence="2">Large ribosomal subunit protein eL15</fullName>
    </recommendedName>
    <alternativeName>
        <fullName>50S ribosomal protein L15e</fullName>
    </alternativeName>
</protein>
<keyword id="KW-1185">Reference proteome</keyword>
<keyword id="KW-0687">Ribonucleoprotein</keyword>
<keyword id="KW-0689">Ribosomal protein</keyword>
<reference key="1">
    <citation type="journal article" date="1999" name="DNA Res.">
        <title>Complete genome sequence of an aerobic hyper-thermophilic crenarchaeon, Aeropyrum pernix K1.</title>
        <authorList>
            <person name="Kawarabayasi Y."/>
            <person name="Hino Y."/>
            <person name="Horikawa H."/>
            <person name="Yamazaki S."/>
            <person name="Haikawa Y."/>
            <person name="Jin-no K."/>
            <person name="Takahashi M."/>
            <person name="Sekine M."/>
            <person name="Baba S."/>
            <person name="Ankai A."/>
            <person name="Kosugi H."/>
            <person name="Hosoyama A."/>
            <person name="Fukui S."/>
            <person name="Nagai Y."/>
            <person name="Nishijima K."/>
            <person name="Nakazawa H."/>
            <person name="Takamiya M."/>
            <person name="Masuda S."/>
            <person name="Funahashi T."/>
            <person name="Tanaka T."/>
            <person name="Kudoh Y."/>
            <person name="Yamazaki J."/>
            <person name="Kushida N."/>
            <person name="Oguchi A."/>
            <person name="Aoki K."/>
            <person name="Kubota K."/>
            <person name="Nakamura Y."/>
            <person name="Nomura N."/>
            <person name="Sako Y."/>
            <person name="Kikuchi H."/>
        </authorList>
    </citation>
    <scope>NUCLEOTIDE SEQUENCE [LARGE SCALE GENOMIC DNA]</scope>
    <source>
        <strain>ATCC 700893 / DSM 11879 / JCM 9820 / NBRC 100138 / K1</strain>
    </source>
</reference>
<comment type="similarity">
    <text evidence="2">Belongs to the eukaryotic ribosomal protein eL15 family.</text>
</comment>
<name>RL15E_AERPE</name>
<sequence>MALSMYHYIAREWKKPYEGLHGELMKARLLEWRRQPSILRVEKPTRLDRARALGYKAKQGVIVARVRVRKGGRRKPRPNKGRRPKRMGVYGFAPAKSLRLIAEERAQRKYPNLVVLNSYYVGEDGRYKWYEVILVDPNHPAIKNDPELNWVTTGKHKGRPFRGLTSAGKKMRGLRKSRGLKGTHKYKWKKKAKERILRKRHEASRGARLIEPDEIREKFHKGDLT</sequence>
<dbReference type="EMBL" id="BA000002">
    <property type="protein sequence ID" value="BAA80450.1"/>
    <property type="molecule type" value="Genomic_DNA"/>
</dbReference>
<dbReference type="PIR" id="D72624">
    <property type="entry name" value="D72624"/>
</dbReference>
<dbReference type="RefSeq" id="WP_010866381.1">
    <property type="nucleotide sequence ID" value="NC_000854.2"/>
</dbReference>
<dbReference type="SMR" id="Q9YBZ8"/>
<dbReference type="STRING" id="272557.APE_1452"/>
<dbReference type="EnsemblBacteria" id="BAA80450">
    <property type="protein sequence ID" value="BAA80450"/>
    <property type="gene ID" value="APE_1452"/>
</dbReference>
<dbReference type="GeneID" id="1446026"/>
<dbReference type="KEGG" id="ape:APE_1452"/>
<dbReference type="PATRIC" id="fig|272557.25.peg.983"/>
<dbReference type="eggNOG" id="arCOG04209">
    <property type="taxonomic scope" value="Archaea"/>
</dbReference>
<dbReference type="Proteomes" id="UP000002518">
    <property type="component" value="Chromosome"/>
</dbReference>
<dbReference type="GO" id="GO:0022625">
    <property type="term" value="C:cytosolic large ribosomal subunit"/>
    <property type="evidence" value="ECO:0007669"/>
    <property type="project" value="TreeGrafter"/>
</dbReference>
<dbReference type="GO" id="GO:0003723">
    <property type="term" value="F:RNA binding"/>
    <property type="evidence" value="ECO:0007669"/>
    <property type="project" value="TreeGrafter"/>
</dbReference>
<dbReference type="GO" id="GO:0003735">
    <property type="term" value="F:structural constituent of ribosome"/>
    <property type="evidence" value="ECO:0007669"/>
    <property type="project" value="InterPro"/>
</dbReference>
<dbReference type="GO" id="GO:0002181">
    <property type="term" value="P:cytoplasmic translation"/>
    <property type="evidence" value="ECO:0007669"/>
    <property type="project" value="TreeGrafter"/>
</dbReference>
<dbReference type="FunFam" id="3.40.1120.10:FF:000002">
    <property type="entry name" value="50S ribosomal protein L15e"/>
    <property type="match status" value="1"/>
</dbReference>
<dbReference type="Gene3D" id="3.40.1120.10">
    <property type="entry name" value="Ribosomal protein l15e"/>
    <property type="match status" value="1"/>
</dbReference>
<dbReference type="HAMAP" id="MF_00256">
    <property type="entry name" value="Ribosomal_eL15"/>
    <property type="match status" value="1"/>
</dbReference>
<dbReference type="InterPro" id="IPR024794">
    <property type="entry name" value="Rbsml_eL15_core_dom_sf"/>
</dbReference>
<dbReference type="InterPro" id="IPR000439">
    <property type="entry name" value="Ribosomal_eL15"/>
</dbReference>
<dbReference type="InterPro" id="IPR020926">
    <property type="entry name" value="Ribosomal_eL15_arc"/>
</dbReference>
<dbReference type="InterPro" id="IPR020925">
    <property type="entry name" value="Ribosomal_eL15_CS"/>
</dbReference>
<dbReference type="InterPro" id="IPR012678">
    <property type="entry name" value="Ribosomal_uL23/eL15/eS24_sf"/>
</dbReference>
<dbReference type="NCBIfam" id="NF003269">
    <property type="entry name" value="PRK04243.1"/>
    <property type="match status" value="1"/>
</dbReference>
<dbReference type="PANTHER" id="PTHR11847:SF4">
    <property type="entry name" value="LARGE RIBOSOMAL SUBUNIT PROTEIN EL15"/>
    <property type="match status" value="1"/>
</dbReference>
<dbReference type="PANTHER" id="PTHR11847">
    <property type="entry name" value="RIBOSOMAL PROTEIN L15"/>
    <property type="match status" value="1"/>
</dbReference>
<dbReference type="Pfam" id="PF00827">
    <property type="entry name" value="Ribosomal_L15e"/>
    <property type="match status" value="1"/>
</dbReference>
<dbReference type="SMART" id="SM01384">
    <property type="entry name" value="Ribosomal_L15e"/>
    <property type="match status" value="1"/>
</dbReference>
<dbReference type="SUPFAM" id="SSF54189">
    <property type="entry name" value="Ribosomal proteins S24e, L23 and L15e"/>
    <property type="match status" value="1"/>
</dbReference>
<dbReference type="PROSITE" id="PS01194">
    <property type="entry name" value="RIBOSOMAL_L15E"/>
    <property type="match status" value="1"/>
</dbReference>
<accession>Q9YBZ8</accession>
<gene>
    <name type="primary">rpl15e</name>
    <name type="ordered locus">APE_1452</name>
</gene>
<organism>
    <name type="scientific">Aeropyrum pernix (strain ATCC 700893 / DSM 11879 / JCM 9820 / NBRC 100138 / K1)</name>
    <dbReference type="NCBI Taxonomy" id="272557"/>
    <lineage>
        <taxon>Archaea</taxon>
        <taxon>Thermoproteota</taxon>
        <taxon>Thermoprotei</taxon>
        <taxon>Desulfurococcales</taxon>
        <taxon>Desulfurococcaceae</taxon>
        <taxon>Aeropyrum</taxon>
    </lineage>
</organism>
<proteinExistence type="inferred from homology"/>